<name>GLNE_VIBPA</name>
<gene>
    <name evidence="1" type="primary">glnE</name>
    <name type="ordered locus">VP0423</name>
</gene>
<dbReference type="EC" id="2.7.7.89" evidence="1"/>
<dbReference type="EC" id="2.7.7.42" evidence="1"/>
<dbReference type="EMBL" id="BA000031">
    <property type="protein sequence ID" value="BAC58686.1"/>
    <property type="molecule type" value="Genomic_DNA"/>
</dbReference>
<dbReference type="RefSeq" id="NP_796802.1">
    <property type="nucleotide sequence ID" value="NC_004603.1"/>
</dbReference>
<dbReference type="RefSeq" id="WP_005455447.1">
    <property type="nucleotide sequence ID" value="NC_004603.1"/>
</dbReference>
<dbReference type="SMR" id="Q87SK0"/>
<dbReference type="GeneID" id="1187891"/>
<dbReference type="KEGG" id="vpa:VP0423"/>
<dbReference type="PATRIC" id="fig|223926.6.peg.402"/>
<dbReference type="eggNOG" id="COG1391">
    <property type="taxonomic scope" value="Bacteria"/>
</dbReference>
<dbReference type="HOGENOM" id="CLU_006233_0_1_6"/>
<dbReference type="Proteomes" id="UP000002493">
    <property type="component" value="Chromosome 1"/>
</dbReference>
<dbReference type="GO" id="GO:0005829">
    <property type="term" value="C:cytosol"/>
    <property type="evidence" value="ECO:0007669"/>
    <property type="project" value="TreeGrafter"/>
</dbReference>
<dbReference type="GO" id="GO:0008882">
    <property type="term" value="F:[glutamate-ammonia-ligase] adenylyltransferase activity"/>
    <property type="evidence" value="ECO:0007669"/>
    <property type="project" value="UniProtKB-UniRule"/>
</dbReference>
<dbReference type="GO" id="GO:0047388">
    <property type="term" value="F:[glutamine synthetase]-adenylyl-L-tyrosine phosphorylase activity"/>
    <property type="evidence" value="ECO:0007669"/>
    <property type="project" value="UniProtKB-EC"/>
</dbReference>
<dbReference type="GO" id="GO:0005524">
    <property type="term" value="F:ATP binding"/>
    <property type="evidence" value="ECO:0007669"/>
    <property type="project" value="UniProtKB-UniRule"/>
</dbReference>
<dbReference type="GO" id="GO:0000287">
    <property type="term" value="F:magnesium ion binding"/>
    <property type="evidence" value="ECO:0007669"/>
    <property type="project" value="UniProtKB-UniRule"/>
</dbReference>
<dbReference type="GO" id="GO:0000820">
    <property type="term" value="P:regulation of glutamine family amino acid metabolic process"/>
    <property type="evidence" value="ECO:0007669"/>
    <property type="project" value="UniProtKB-UniRule"/>
</dbReference>
<dbReference type="CDD" id="cd05401">
    <property type="entry name" value="NT_GlnE_GlnD_like"/>
    <property type="match status" value="2"/>
</dbReference>
<dbReference type="FunFam" id="1.20.120.1510:FF:000001">
    <property type="entry name" value="Bifunctional glutamine synthetase adenylyltransferase/adenylyl-removing enzyme"/>
    <property type="match status" value="1"/>
</dbReference>
<dbReference type="FunFam" id="1.20.120.330:FF:000005">
    <property type="entry name" value="Bifunctional glutamine synthetase adenylyltransferase/adenylyl-removing enzyme"/>
    <property type="match status" value="1"/>
</dbReference>
<dbReference type="FunFam" id="1.20.120.330:FF:000008">
    <property type="entry name" value="Bifunctional glutamine synthetase adenylyltransferase/adenylyl-removing enzyme"/>
    <property type="match status" value="1"/>
</dbReference>
<dbReference type="FunFam" id="3.30.460.10:FF:000009">
    <property type="entry name" value="Bifunctional glutamine synthetase adenylyltransferase/adenylyl-removing enzyme"/>
    <property type="match status" value="1"/>
</dbReference>
<dbReference type="FunFam" id="3.30.460.10:FF:000014">
    <property type="entry name" value="Bifunctional glutamine synthetase adenylyltransferase/adenylyl-removing enzyme"/>
    <property type="match status" value="1"/>
</dbReference>
<dbReference type="Gene3D" id="1.20.120.1510">
    <property type="match status" value="1"/>
</dbReference>
<dbReference type="Gene3D" id="3.30.460.10">
    <property type="entry name" value="Beta Polymerase, domain 2"/>
    <property type="match status" value="2"/>
</dbReference>
<dbReference type="Gene3D" id="1.10.4050.10">
    <property type="entry name" value="Glutamine synthase adenylyltransferase GlnE"/>
    <property type="match status" value="1"/>
</dbReference>
<dbReference type="Gene3D" id="1.20.120.330">
    <property type="entry name" value="Nucleotidyltransferases domain 2"/>
    <property type="match status" value="2"/>
</dbReference>
<dbReference type="HAMAP" id="MF_00802">
    <property type="entry name" value="GlnE"/>
    <property type="match status" value="1"/>
</dbReference>
<dbReference type="InterPro" id="IPR023057">
    <property type="entry name" value="GlnE"/>
</dbReference>
<dbReference type="InterPro" id="IPR005190">
    <property type="entry name" value="GlnE_rpt_dom"/>
</dbReference>
<dbReference type="InterPro" id="IPR043519">
    <property type="entry name" value="NT_sf"/>
</dbReference>
<dbReference type="InterPro" id="IPR013546">
    <property type="entry name" value="PII_UdlTrfase/GS_AdlTrfase"/>
</dbReference>
<dbReference type="NCBIfam" id="NF008292">
    <property type="entry name" value="PRK11072.1"/>
    <property type="match status" value="1"/>
</dbReference>
<dbReference type="PANTHER" id="PTHR30621:SF0">
    <property type="entry name" value="BIFUNCTIONAL GLUTAMINE SYNTHETASE ADENYLYLTRANSFERASE_ADENYLYL-REMOVING ENZYME"/>
    <property type="match status" value="1"/>
</dbReference>
<dbReference type="PANTHER" id="PTHR30621">
    <property type="entry name" value="GLUTAMINE SYNTHETASE ADENYLYLTRANSFERASE"/>
    <property type="match status" value="1"/>
</dbReference>
<dbReference type="Pfam" id="PF08335">
    <property type="entry name" value="GlnD_UR_UTase"/>
    <property type="match status" value="2"/>
</dbReference>
<dbReference type="Pfam" id="PF03710">
    <property type="entry name" value="GlnE"/>
    <property type="match status" value="2"/>
</dbReference>
<dbReference type="SUPFAM" id="SSF81301">
    <property type="entry name" value="Nucleotidyltransferase"/>
    <property type="match status" value="2"/>
</dbReference>
<dbReference type="SUPFAM" id="SSF81593">
    <property type="entry name" value="Nucleotidyltransferase substrate binding subunit/domain"/>
    <property type="match status" value="2"/>
</dbReference>
<feature type="chain" id="PRO_0000209282" description="Bifunctional glutamine synthetase adenylyltransferase/adenylyl-removing enzyme">
    <location>
        <begin position="1"/>
        <end position="947"/>
    </location>
</feature>
<feature type="region of interest" description="Adenylyl removase" evidence="1">
    <location>
        <begin position="1"/>
        <end position="443"/>
    </location>
</feature>
<feature type="region of interest" description="Adenylyl transferase" evidence="1">
    <location>
        <begin position="451"/>
        <end position="947"/>
    </location>
</feature>
<keyword id="KW-0067">ATP-binding</keyword>
<keyword id="KW-0460">Magnesium</keyword>
<keyword id="KW-0511">Multifunctional enzyme</keyword>
<keyword id="KW-0547">Nucleotide-binding</keyword>
<keyword id="KW-0548">Nucleotidyltransferase</keyword>
<keyword id="KW-0808">Transferase</keyword>
<proteinExistence type="inferred from homology"/>
<accession>Q87SK0</accession>
<sequence>MQLPSSLVSVAESAVQNAQEAGYLQSWPNEVVEQFHYVSALSQFITETIHRDEALAQQLPTMLSELSRHQAYRTRLAALLAECPDEMSGHRVLRQFRNREMVYIAWKDFLHAWTLEESLRHLSQLAEAMIFETYQWQYKICCAEWGTPTNAEGEAQPMLIIGMGKLGGGELNFSSDIDLIFTYPENGETQGARRSIANAQFFTRLGQRIIKALDQQTFDGFCYRVDMRLRPFGESGPLVMSYAALEDYYQEQGRDWERYAMIKARVMGCEMYPQYQELRKMLRPFVFRRYIDFSAIQSLRRMKSMISSEVRRRGLTNNIKLGAGGIREIEFIAQVFQLIRGGREPSLRNRGLLETLSGIEELALLTPQEVSNLEAAYKYLRQLENLLQAMADKQTQTLPDCDIERLKLATAMQLESWDLLIEQTQQHMNKVHQVFETLIGDDEEDEGSTIARHFHELWDMANKQDVLELILEQDIQVEEPAIFSKAIINFKADLAKKTLGPRGREVLNRLMPKVFDAVFAHPDAQFGLPRVLHLLHNICTRTTYLELLDEHPAALVQLVRLCTASPMISEQLSRYPILLDELIDPQQLYNPIPLDSYRTELRDFLARIPEDDMEQQMEALRQFKQICILRIAAADIAGVLPVMKVSDHLTYLAEAIVEAVVSQAWLQVSEKYGEPTHVKDREGKGFAVIGYGKVGGWELGYNSDLDIVFMHDCPVNVYTDGKKEIDGRQFYLRLAQRIIHIFSTRTASGILYEVDTRLRPSGASGLLVSPTDAFDDYQHQDAWTWEHQALVRARMIYGDEPLAIAFHNTRHDVLCKPRDEQTLKKEVVEMREKMRDHLGGKKSGRFMIKQDVGGITDIEFLAQYLVLNYSHEKPKLTRWCDNVRIYETLIAQGVMEEDQAMQLIRAYTAMRNEIHHRNLLNLDADVVEDKFVAEREWVKQAWNQWFA</sequence>
<organism>
    <name type="scientific">Vibrio parahaemolyticus serotype O3:K6 (strain RIMD 2210633)</name>
    <dbReference type="NCBI Taxonomy" id="223926"/>
    <lineage>
        <taxon>Bacteria</taxon>
        <taxon>Pseudomonadati</taxon>
        <taxon>Pseudomonadota</taxon>
        <taxon>Gammaproteobacteria</taxon>
        <taxon>Vibrionales</taxon>
        <taxon>Vibrionaceae</taxon>
        <taxon>Vibrio</taxon>
    </lineage>
</organism>
<comment type="function">
    <text evidence="1">Involved in the regulation of glutamine synthetase GlnA, a key enzyme in the process to assimilate ammonia. When cellular nitrogen levels are high, the C-terminal adenylyl transferase (AT) inactivates GlnA by covalent transfer of an adenylyl group from ATP to specific tyrosine residue of GlnA, thus reducing its activity. Conversely, when nitrogen levels are low, the N-terminal adenylyl removase (AR) activates GlnA by removing the adenylyl group by phosphorolysis, increasing its activity. The regulatory region of GlnE binds the signal transduction protein PII (GlnB) which indicates the nitrogen status of the cell.</text>
</comment>
<comment type="catalytic activity">
    <reaction evidence="1">
        <text>[glutamine synthetase]-O(4)-(5'-adenylyl)-L-tyrosine + phosphate = [glutamine synthetase]-L-tyrosine + ADP</text>
        <dbReference type="Rhea" id="RHEA:43716"/>
        <dbReference type="Rhea" id="RHEA-COMP:10660"/>
        <dbReference type="Rhea" id="RHEA-COMP:10661"/>
        <dbReference type="ChEBI" id="CHEBI:43474"/>
        <dbReference type="ChEBI" id="CHEBI:46858"/>
        <dbReference type="ChEBI" id="CHEBI:83624"/>
        <dbReference type="ChEBI" id="CHEBI:456216"/>
        <dbReference type="EC" id="2.7.7.89"/>
    </reaction>
</comment>
<comment type="catalytic activity">
    <reaction evidence="1">
        <text>[glutamine synthetase]-L-tyrosine + ATP = [glutamine synthetase]-O(4)-(5'-adenylyl)-L-tyrosine + diphosphate</text>
        <dbReference type="Rhea" id="RHEA:18589"/>
        <dbReference type="Rhea" id="RHEA-COMP:10660"/>
        <dbReference type="Rhea" id="RHEA-COMP:10661"/>
        <dbReference type="ChEBI" id="CHEBI:30616"/>
        <dbReference type="ChEBI" id="CHEBI:33019"/>
        <dbReference type="ChEBI" id="CHEBI:46858"/>
        <dbReference type="ChEBI" id="CHEBI:83624"/>
        <dbReference type="EC" id="2.7.7.42"/>
    </reaction>
</comment>
<comment type="cofactor">
    <cofactor evidence="1">
        <name>Mg(2+)</name>
        <dbReference type="ChEBI" id="CHEBI:18420"/>
    </cofactor>
</comment>
<comment type="similarity">
    <text evidence="1">Belongs to the GlnE family.</text>
</comment>
<reference key="1">
    <citation type="journal article" date="2003" name="Lancet">
        <title>Genome sequence of Vibrio parahaemolyticus: a pathogenic mechanism distinct from that of V. cholerae.</title>
        <authorList>
            <person name="Makino K."/>
            <person name="Oshima K."/>
            <person name="Kurokawa K."/>
            <person name="Yokoyama K."/>
            <person name="Uda T."/>
            <person name="Tagomori K."/>
            <person name="Iijima Y."/>
            <person name="Najima M."/>
            <person name="Nakano M."/>
            <person name="Yamashita A."/>
            <person name="Kubota Y."/>
            <person name="Kimura S."/>
            <person name="Yasunaga T."/>
            <person name="Honda T."/>
            <person name="Shinagawa H."/>
            <person name="Hattori M."/>
            <person name="Iida T."/>
        </authorList>
    </citation>
    <scope>NUCLEOTIDE SEQUENCE [LARGE SCALE GENOMIC DNA]</scope>
    <source>
        <strain>RIMD 2210633</strain>
    </source>
</reference>
<evidence type="ECO:0000255" key="1">
    <source>
        <dbReference type="HAMAP-Rule" id="MF_00802"/>
    </source>
</evidence>
<protein>
    <recommendedName>
        <fullName evidence="1">Bifunctional glutamine synthetase adenylyltransferase/adenylyl-removing enzyme</fullName>
    </recommendedName>
    <alternativeName>
        <fullName evidence="1">ATP:glutamine synthetase adenylyltransferase</fullName>
    </alternativeName>
    <alternativeName>
        <fullName evidence="1">ATase</fullName>
    </alternativeName>
    <domain>
        <recommendedName>
            <fullName evidence="1">Glutamine synthetase adenylyl-L-tyrosine phosphorylase</fullName>
            <ecNumber evidence="1">2.7.7.89</ecNumber>
        </recommendedName>
        <alternativeName>
            <fullName evidence="1">Adenylyl removase</fullName>
            <shortName evidence="1">AR</shortName>
            <shortName evidence="1">AT-N</shortName>
        </alternativeName>
    </domain>
    <domain>
        <recommendedName>
            <fullName evidence="1">Glutamine synthetase adenylyl transferase</fullName>
            <ecNumber evidence="1">2.7.7.42</ecNumber>
        </recommendedName>
        <alternativeName>
            <fullName evidence="1">Adenylyl transferase</fullName>
            <shortName evidence="1">AT</shortName>
            <shortName evidence="1">AT-C</shortName>
        </alternativeName>
    </domain>
</protein>